<reference key="1">
    <citation type="submission" date="2007-11" db="EMBL/GenBank/DDBJ databases">
        <title>Complete sequence of Delftia acidovorans DSM 14801 / SPH-1.</title>
        <authorList>
            <person name="Copeland A."/>
            <person name="Lucas S."/>
            <person name="Lapidus A."/>
            <person name="Barry K."/>
            <person name="Glavina del Rio T."/>
            <person name="Dalin E."/>
            <person name="Tice H."/>
            <person name="Pitluck S."/>
            <person name="Lowry S."/>
            <person name="Clum A."/>
            <person name="Schmutz J."/>
            <person name="Larimer F."/>
            <person name="Land M."/>
            <person name="Hauser L."/>
            <person name="Kyrpides N."/>
            <person name="Kim E."/>
            <person name="Schleheck D."/>
            <person name="Richardson P."/>
        </authorList>
    </citation>
    <scope>NUCLEOTIDE SEQUENCE [LARGE SCALE GENOMIC DNA]</scope>
    <source>
        <strain>DSM 14801 / SPH-1</strain>
    </source>
</reference>
<dbReference type="EC" id="1.6.5.-" evidence="1"/>
<dbReference type="EC" id="1.7.1.17" evidence="1"/>
<dbReference type="EMBL" id="CP000884">
    <property type="protein sequence ID" value="ABX37222.1"/>
    <property type="molecule type" value="Genomic_DNA"/>
</dbReference>
<dbReference type="RefSeq" id="WP_012206392.1">
    <property type="nucleotide sequence ID" value="NC_010002.1"/>
</dbReference>
<dbReference type="SMR" id="A9C3B1"/>
<dbReference type="STRING" id="398578.Daci_4593"/>
<dbReference type="KEGG" id="dac:Daci_4593"/>
<dbReference type="eggNOG" id="COG1182">
    <property type="taxonomic scope" value="Bacteria"/>
</dbReference>
<dbReference type="HOGENOM" id="CLU_088964_0_0_4"/>
<dbReference type="Proteomes" id="UP000000784">
    <property type="component" value="Chromosome"/>
</dbReference>
<dbReference type="GO" id="GO:0009055">
    <property type="term" value="F:electron transfer activity"/>
    <property type="evidence" value="ECO:0007669"/>
    <property type="project" value="UniProtKB-UniRule"/>
</dbReference>
<dbReference type="GO" id="GO:0010181">
    <property type="term" value="F:FMN binding"/>
    <property type="evidence" value="ECO:0007669"/>
    <property type="project" value="UniProtKB-UniRule"/>
</dbReference>
<dbReference type="GO" id="GO:0016652">
    <property type="term" value="F:oxidoreductase activity, acting on NAD(P)H as acceptor"/>
    <property type="evidence" value="ECO:0007669"/>
    <property type="project" value="UniProtKB-UniRule"/>
</dbReference>
<dbReference type="GO" id="GO:0016655">
    <property type="term" value="F:oxidoreductase activity, acting on NAD(P)H, quinone or similar compound as acceptor"/>
    <property type="evidence" value="ECO:0007669"/>
    <property type="project" value="InterPro"/>
</dbReference>
<dbReference type="Gene3D" id="3.40.50.360">
    <property type="match status" value="1"/>
</dbReference>
<dbReference type="HAMAP" id="MF_01216">
    <property type="entry name" value="Azoreductase_type1"/>
    <property type="match status" value="1"/>
</dbReference>
<dbReference type="InterPro" id="IPR003680">
    <property type="entry name" value="Flavodoxin_fold"/>
</dbReference>
<dbReference type="InterPro" id="IPR029039">
    <property type="entry name" value="Flavoprotein-like_sf"/>
</dbReference>
<dbReference type="InterPro" id="IPR050104">
    <property type="entry name" value="FMN-dep_NADH:Q_OxRdtase_AzoR1"/>
</dbReference>
<dbReference type="InterPro" id="IPR023048">
    <property type="entry name" value="NADH:quinone_OxRdtase_FMN_depd"/>
</dbReference>
<dbReference type="PANTHER" id="PTHR43741">
    <property type="entry name" value="FMN-DEPENDENT NADH-AZOREDUCTASE 1"/>
    <property type="match status" value="1"/>
</dbReference>
<dbReference type="PANTHER" id="PTHR43741:SF4">
    <property type="entry name" value="FMN-DEPENDENT NADH:QUINONE OXIDOREDUCTASE"/>
    <property type="match status" value="1"/>
</dbReference>
<dbReference type="Pfam" id="PF02525">
    <property type="entry name" value="Flavodoxin_2"/>
    <property type="match status" value="1"/>
</dbReference>
<dbReference type="SUPFAM" id="SSF52218">
    <property type="entry name" value="Flavoproteins"/>
    <property type="match status" value="1"/>
</dbReference>
<comment type="function">
    <text evidence="1">Quinone reductase that provides resistance to thiol-specific stress caused by electrophilic quinones.</text>
</comment>
<comment type="function">
    <text evidence="1">Also exhibits azoreductase activity. Catalyzes the reductive cleavage of the azo bond in aromatic azo compounds to the corresponding amines.</text>
</comment>
<comment type="catalytic activity">
    <reaction evidence="1">
        <text>2 a quinone + NADH + H(+) = 2 a 1,4-benzosemiquinone + NAD(+)</text>
        <dbReference type="Rhea" id="RHEA:65952"/>
        <dbReference type="ChEBI" id="CHEBI:15378"/>
        <dbReference type="ChEBI" id="CHEBI:57540"/>
        <dbReference type="ChEBI" id="CHEBI:57945"/>
        <dbReference type="ChEBI" id="CHEBI:132124"/>
        <dbReference type="ChEBI" id="CHEBI:134225"/>
    </reaction>
</comment>
<comment type="catalytic activity">
    <reaction evidence="1">
        <text>N,N-dimethyl-1,4-phenylenediamine + anthranilate + 2 NAD(+) = 2-(4-dimethylaminophenyl)diazenylbenzoate + 2 NADH + 2 H(+)</text>
        <dbReference type="Rhea" id="RHEA:55872"/>
        <dbReference type="ChEBI" id="CHEBI:15378"/>
        <dbReference type="ChEBI" id="CHEBI:15783"/>
        <dbReference type="ChEBI" id="CHEBI:16567"/>
        <dbReference type="ChEBI" id="CHEBI:57540"/>
        <dbReference type="ChEBI" id="CHEBI:57945"/>
        <dbReference type="ChEBI" id="CHEBI:71579"/>
        <dbReference type="EC" id="1.7.1.17"/>
    </reaction>
</comment>
<comment type="cofactor">
    <cofactor evidence="1">
        <name>FMN</name>
        <dbReference type="ChEBI" id="CHEBI:58210"/>
    </cofactor>
    <text evidence="1">Binds 1 FMN per subunit.</text>
</comment>
<comment type="subunit">
    <text evidence="1">Homodimer.</text>
</comment>
<comment type="similarity">
    <text evidence="1">Belongs to the azoreductase type 1 family.</text>
</comment>
<keyword id="KW-0285">Flavoprotein</keyword>
<keyword id="KW-0288">FMN</keyword>
<keyword id="KW-0520">NAD</keyword>
<keyword id="KW-0560">Oxidoreductase</keyword>
<keyword id="KW-1185">Reference proteome</keyword>
<protein>
    <recommendedName>
        <fullName evidence="1">FMN-dependent NADH:quinone oxidoreductase</fullName>
        <ecNumber evidence="1">1.6.5.-</ecNumber>
    </recommendedName>
    <alternativeName>
        <fullName evidence="1">Azo-dye reductase</fullName>
    </alternativeName>
    <alternativeName>
        <fullName evidence="1">FMN-dependent NADH-azo compound oxidoreductase</fullName>
    </alternativeName>
    <alternativeName>
        <fullName evidence="1">FMN-dependent NADH-azoreductase</fullName>
        <ecNumber evidence="1">1.7.1.17</ecNumber>
    </alternativeName>
</protein>
<evidence type="ECO:0000255" key="1">
    <source>
        <dbReference type="HAMAP-Rule" id="MF_01216"/>
    </source>
</evidence>
<name>AZOR_DELAS</name>
<accession>A9C3B1</accession>
<sequence>MQVLHIDSSITGAASVSRQLTAQTVAALVAANPGAKVEYLDLAVNAPDHLNAVSMGFRTGQAATTEAERAQNAISEALVSQFLAADVVVVGAPFYNFTISSQLKAWIDRIAQGGRTFRYTAAGPEGLAKGKKVIVASTRGGVYSTSEMGQALEHQESYLKTVFGFLGITDVSIVRAEGVAMGDESKAKALESARSDIVRAAAAANQEAAIAA</sequence>
<feature type="chain" id="PRO_1000138973" description="FMN-dependent NADH:quinone oxidoreductase">
    <location>
        <begin position="1"/>
        <end position="212"/>
    </location>
</feature>
<feature type="binding site" evidence="1">
    <location>
        <position position="9"/>
    </location>
    <ligand>
        <name>FMN</name>
        <dbReference type="ChEBI" id="CHEBI:58210"/>
    </ligand>
</feature>
<feature type="binding site" evidence="1">
    <location>
        <begin position="15"/>
        <end position="17"/>
    </location>
    <ligand>
        <name>FMN</name>
        <dbReference type="ChEBI" id="CHEBI:58210"/>
    </ligand>
</feature>
<feature type="binding site" evidence="1">
    <location>
        <begin position="138"/>
        <end position="141"/>
    </location>
    <ligand>
        <name>FMN</name>
        <dbReference type="ChEBI" id="CHEBI:58210"/>
    </ligand>
</feature>
<organism>
    <name type="scientific">Delftia acidovorans (strain DSM 14801 / SPH-1)</name>
    <dbReference type="NCBI Taxonomy" id="398578"/>
    <lineage>
        <taxon>Bacteria</taxon>
        <taxon>Pseudomonadati</taxon>
        <taxon>Pseudomonadota</taxon>
        <taxon>Betaproteobacteria</taxon>
        <taxon>Burkholderiales</taxon>
        <taxon>Comamonadaceae</taxon>
        <taxon>Delftia</taxon>
    </lineage>
</organism>
<gene>
    <name evidence="1" type="primary">azoR</name>
    <name type="ordered locus">Daci_4593</name>
</gene>
<proteinExistence type="inferred from homology"/>